<gene>
    <name evidence="1" type="primary">serS</name>
    <name type="ordered locus">FTA_1576</name>
</gene>
<evidence type="ECO:0000255" key="1">
    <source>
        <dbReference type="HAMAP-Rule" id="MF_00176"/>
    </source>
</evidence>
<evidence type="ECO:0000256" key="2">
    <source>
        <dbReference type="SAM" id="MobiDB-lite"/>
    </source>
</evidence>
<keyword id="KW-0030">Aminoacyl-tRNA synthetase</keyword>
<keyword id="KW-0067">ATP-binding</keyword>
<keyword id="KW-0963">Cytoplasm</keyword>
<keyword id="KW-0436">Ligase</keyword>
<keyword id="KW-0547">Nucleotide-binding</keyword>
<keyword id="KW-0648">Protein biosynthesis</keyword>
<feature type="chain" id="PRO_1000019682" description="Serine--tRNA ligase">
    <location>
        <begin position="1"/>
        <end position="426"/>
    </location>
</feature>
<feature type="region of interest" description="Disordered" evidence="2">
    <location>
        <begin position="36"/>
        <end position="66"/>
    </location>
</feature>
<feature type="compositionally biased region" description="Polar residues" evidence="2">
    <location>
        <begin position="46"/>
        <end position="55"/>
    </location>
</feature>
<feature type="binding site" evidence="1">
    <location>
        <begin position="233"/>
        <end position="235"/>
    </location>
    <ligand>
        <name>L-serine</name>
        <dbReference type="ChEBI" id="CHEBI:33384"/>
    </ligand>
</feature>
<feature type="binding site" evidence="1">
    <location>
        <begin position="264"/>
        <end position="266"/>
    </location>
    <ligand>
        <name>ATP</name>
        <dbReference type="ChEBI" id="CHEBI:30616"/>
    </ligand>
</feature>
<feature type="binding site" evidence="1">
    <location>
        <position position="287"/>
    </location>
    <ligand>
        <name>L-serine</name>
        <dbReference type="ChEBI" id="CHEBI:33384"/>
    </ligand>
</feature>
<feature type="binding site" evidence="1">
    <location>
        <begin position="351"/>
        <end position="354"/>
    </location>
    <ligand>
        <name>ATP</name>
        <dbReference type="ChEBI" id="CHEBI:30616"/>
    </ligand>
</feature>
<feature type="binding site" evidence="1">
    <location>
        <position position="387"/>
    </location>
    <ligand>
        <name>L-serine</name>
        <dbReference type="ChEBI" id="CHEBI:33384"/>
    </ligand>
</feature>
<reference key="1">
    <citation type="journal article" date="2009" name="PLoS ONE">
        <title>Complete genome sequence of Francisella tularensis subspecies holarctica FTNF002-00.</title>
        <authorList>
            <person name="Barabote R.D."/>
            <person name="Xie G."/>
            <person name="Brettin T.S."/>
            <person name="Hinrichs S.H."/>
            <person name="Fey P.D."/>
            <person name="Jay J.J."/>
            <person name="Engle J.L."/>
            <person name="Godbole S.D."/>
            <person name="Noronha J.M."/>
            <person name="Scheuermann R.H."/>
            <person name="Zhou L.W."/>
            <person name="Lion C."/>
            <person name="Dempsey M.P."/>
        </authorList>
    </citation>
    <scope>NUCLEOTIDE SEQUENCE [LARGE SCALE GENOMIC DNA]</scope>
    <source>
        <strain>FTNF002-00 / FTA</strain>
    </source>
</reference>
<dbReference type="EC" id="6.1.1.11" evidence="1"/>
<dbReference type="EMBL" id="CP000803">
    <property type="protein sequence ID" value="ABU62051.1"/>
    <property type="molecule type" value="Genomic_DNA"/>
</dbReference>
<dbReference type="RefSeq" id="WP_003016800.1">
    <property type="nucleotide sequence ID" value="NC_009749.1"/>
</dbReference>
<dbReference type="SMR" id="A7NDJ8"/>
<dbReference type="KEGG" id="fta:FTA_1576"/>
<dbReference type="HOGENOM" id="CLU_023797_1_1_6"/>
<dbReference type="UniPathway" id="UPA00906">
    <property type="reaction ID" value="UER00895"/>
</dbReference>
<dbReference type="GO" id="GO:0005737">
    <property type="term" value="C:cytoplasm"/>
    <property type="evidence" value="ECO:0007669"/>
    <property type="project" value="UniProtKB-SubCell"/>
</dbReference>
<dbReference type="GO" id="GO:0005524">
    <property type="term" value="F:ATP binding"/>
    <property type="evidence" value="ECO:0007669"/>
    <property type="project" value="UniProtKB-UniRule"/>
</dbReference>
<dbReference type="GO" id="GO:0004828">
    <property type="term" value="F:serine-tRNA ligase activity"/>
    <property type="evidence" value="ECO:0007669"/>
    <property type="project" value="UniProtKB-UniRule"/>
</dbReference>
<dbReference type="GO" id="GO:0016260">
    <property type="term" value="P:selenocysteine biosynthetic process"/>
    <property type="evidence" value="ECO:0007669"/>
    <property type="project" value="UniProtKB-UniRule"/>
</dbReference>
<dbReference type="GO" id="GO:0006434">
    <property type="term" value="P:seryl-tRNA aminoacylation"/>
    <property type="evidence" value="ECO:0007669"/>
    <property type="project" value="UniProtKB-UniRule"/>
</dbReference>
<dbReference type="CDD" id="cd00770">
    <property type="entry name" value="SerRS_core"/>
    <property type="match status" value="1"/>
</dbReference>
<dbReference type="Gene3D" id="3.30.930.10">
    <property type="entry name" value="Bira Bifunctional Protein, Domain 2"/>
    <property type="match status" value="1"/>
</dbReference>
<dbReference type="Gene3D" id="1.10.287.40">
    <property type="entry name" value="Serine-tRNA synthetase, tRNA binding domain"/>
    <property type="match status" value="1"/>
</dbReference>
<dbReference type="HAMAP" id="MF_00176">
    <property type="entry name" value="Ser_tRNA_synth_type1"/>
    <property type="match status" value="1"/>
</dbReference>
<dbReference type="InterPro" id="IPR002314">
    <property type="entry name" value="aa-tRNA-synt_IIb"/>
</dbReference>
<dbReference type="InterPro" id="IPR006195">
    <property type="entry name" value="aa-tRNA-synth_II"/>
</dbReference>
<dbReference type="InterPro" id="IPR045864">
    <property type="entry name" value="aa-tRNA-synth_II/BPL/LPL"/>
</dbReference>
<dbReference type="InterPro" id="IPR002317">
    <property type="entry name" value="Ser-tRNA-ligase_type_1"/>
</dbReference>
<dbReference type="InterPro" id="IPR015866">
    <property type="entry name" value="Ser-tRNA-synth_1_N"/>
</dbReference>
<dbReference type="InterPro" id="IPR042103">
    <property type="entry name" value="SerRS_1_N_sf"/>
</dbReference>
<dbReference type="InterPro" id="IPR033729">
    <property type="entry name" value="SerRS_core"/>
</dbReference>
<dbReference type="InterPro" id="IPR010978">
    <property type="entry name" value="tRNA-bd_arm"/>
</dbReference>
<dbReference type="NCBIfam" id="TIGR00414">
    <property type="entry name" value="serS"/>
    <property type="match status" value="1"/>
</dbReference>
<dbReference type="PANTHER" id="PTHR43697:SF1">
    <property type="entry name" value="SERINE--TRNA LIGASE"/>
    <property type="match status" value="1"/>
</dbReference>
<dbReference type="PANTHER" id="PTHR43697">
    <property type="entry name" value="SERYL-TRNA SYNTHETASE"/>
    <property type="match status" value="1"/>
</dbReference>
<dbReference type="Pfam" id="PF02403">
    <property type="entry name" value="Seryl_tRNA_N"/>
    <property type="match status" value="1"/>
</dbReference>
<dbReference type="Pfam" id="PF00587">
    <property type="entry name" value="tRNA-synt_2b"/>
    <property type="match status" value="1"/>
</dbReference>
<dbReference type="PIRSF" id="PIRSF001529">
    <property type="entry name" value="Ser-tRNA-synth_IIa"/>
    <property type="match status" value="1"/>
</dbReference>
<dbReference type="PRINTS" id="PR00981">
    <property type="entry name" value="TRNASYNTHSER"/>
</dbReference>
<dbReference type="SUPFAM" id="SSF55681">
    <property type="entry name" value="Class II aaRS and biotin synthetases"/>
    <property type="match status" value="1"/>
</dbReference>
<dbReference type="SUPFAM" id="SSF46589">
    <property type="entry name" value="tRNA-binding arm"/>
    <property type="match status" value="1"/>
</dbReference>
<dbReference type="PROSITE" id="PS50862">
    <property type="entry name" value="AA_TRNA_LIGASE_II"/>
    <property type="match status" value="1"/>
</dbReference>
<accession>A7NDJ8</accession>
<protein>
    <recommendedName>
        <fullName evidence="1">Serine--tRNA ligase</fullName>
        <ecNumber evidence="1">6.1.1.11</ecNumber>
    </recommendedName>
    <alternativeName>
        <fullName evidence="1">Seryl-tRNA synthetase</fullName>
        <shortName evidence="1">SerRS</shortName>
    </alternativeName>
    <alternativeName>
        <fullName evidence="1">Seryl-tRNA(Ser/Sec) synthetase</fullName>
    </alternativeName>
</protein>
<name>SYS_FRATF</name>
<sequence length="426" mass="48570">MLDAKYVKDNLQQVAEKLATRGYQFDIAEFEAQEQKRKHLQERTQDLQSQRNTISKEIGQKKAKGEDTSDIFAKVNQINEELKIIEKELKDLQDTINQTLLSMPNLPADDVPVGKDENDNVEIRRWGTPREFHPEAPAKDHSDIGEILKMIDFKAAAKVTGSRFMVLKNKIAKLHRALSQFMLDLHTEKHGYEELYVPYLVNNDSLYGTGQLPKFAANLFKLEGDFEYSLIPTAEVPITNLVRDEILDTETLPRYYTAHTPCFRSEAGSYGRDTKGMIRQHQFEKVELVHITTADKGEESLELLTSHAEKVLQKLNLPYRVMKLCTGDMGFSAKKTYDLEVWLPSQNTYREISSCSWCGDFQARRMKARHKNPSMKKPELVHTLNGSGLAVGRTLLAIIENYQQEDGSIMVPDALIKYMGGISVIK</sequence>
<proteinExistence type="inferred from homology"/>
<organism>
    <name type="scientific">Francisella tularensis subsp. holarctica (strain FTNF002-00 / FTA)</name>
    <dbReference type="NCBI Taxonomy" id="458234"/>
    <lineage>
        <taxon>Bacteria</taxon>
        <taxon>Pseudomonadati</taxon>
        <taxon>Pseudomonadota</taxon>
        <taxon>Gammaproteobacteria</taxon>
        <taxon>Thiotrichales</taxon>
        <taxon>Francisellaceae</taxon>
        <taxon>Francisella</taxon>
    </lineage>
</organism>
<comment type="function">
    <text evidence="1">Catalyzes the attachment of serine to tRNA(Ser). Is also able to aminoacylate tRNA(Sec) with serine, to form the misacylated tRNA L-seryl-tRNA(Sec), which will be further converted into selenocysteinyl-tRNA(Sec).</text>
</comment>
<comment type="catalytic activity">
    <reaction evidence="1">
        <text>tRNA(Ser) + L-serine + ATP = L-seryl-tRNA(Ser) + AMP + diphosphate + H(+)</text>
        <dbReference type="Rhea" id="RHEA:12292"/>
        <dbReference type="Rhea" id="RHEA-COMP:9669"/>
        <dbReference type="Rhea" id="RHEA-COMP:9703"/>
        <dbReference type="ChEBI" id="CHEBI:15378"/>
        <dbReference type="ChEBI" id="CHEBI:30616"/>
        <dbReference type="ChEBI" id="CHEBI:33019"/>
        <dbReference type="ChEBI" id="CHEBI:33384"/>
        <dbReference type="ChEBI" id="CHEBI:78442"/>
        <dbReference type="ChEBI" id="CHEBI:78533"/>
        <dbReference type="ChEBI" id="CHEBI:456215"/>
        <dbReference type="EC" id="6.1.1.11"/>
    </reaction>
</comment>
<comment type="catalytic activity">
    <reaction evidence="1">
        <text>tRNA(Sec) + L-serine + ATP = L-seryl-tRNA(Sec) + AMP + diphosphate + H(+)</text>
        <dbReference type="Rhea" id="RHEA:42580"/>
        <dbReference type="Rhea" id="RHEA-COMP:9742"/>
        <dbReference type="Rhea" id="RHEA-COMP:10128"/>
        <dbReference type="ChEBI" id="CHEBI:15378"/>
        <dbReference type="ChEBI" id="CHEBI:30616"/>
        <dbReference type="ChEBI" id="CHEBI:33019"/>
        <dbReference type="ChEBI" id="CHEBI:33384"/>
        <dbReference type="ChEBI" id="CHEBI:78442"/>
        <dbReference type="ChEBI" id="CHEBI:78533"/>
        <dbReference type="ChEBI" id="CHEBI:456215"/>
        <dbReference type="EC" id="6.1.1.11"/>
    </reaction>
</comment>
<comment type="pathway">
    <text evidence="1">Aminoacyl-tRNA biosynthesis; selenocysteinyl-tRNA(Sec) biosynthesis; L-seryl-tRNA(Sec) from L-serine and tRNA(Sec): step 1/1.</text>
</comment>
<comment type="subunit">
    <text evidence="1">Homodimer. The tRNA molecule binds across the dimer.</text>
</comment>
<comment type="subcellular location">
    <subcellularLocation>
        <location evidence="1">Cytoplasm</location>
    </subcellularLocation>
</comment>
<comment type="domain">
    <text evidence="1">Consists of two distinct domains, a catalytic core and a N-terminal extension that is involved in tRNA binding.</text>
</comment>
<comment type="similarity">
    <text evidence="1">Belongs to the class-II aminoacyl-tRNA synthetase family. Type-1 seryl-tRNA synthetase subfamily.</text>
</comment>